<dbReference type="EMBL" id="AC006413">
    <property type="status" value="NOT_ANNOTATED_CDS"/>
    <property type="molecule type" value="Genomic_DNA"/>
</dbReference>
<dbReference type="EMBL" id="CP002685">
    <property type="protein sequence ID" value="AEC06003.1"/>
    <property type="molecule type" value="Genomic_DNA"/>
</dbReference>
<dbReference type="RefSeq" id="NP_001031341.1">
    <property type="nucleotide sequence ID" value="NM_001036264.1"/>
</dbReference>
<dbReference type="SMR" id="Q2V493"/>
<dbReference type="PaxDb" id="3702-AT2G06166.1"/>
<dbReference type="EnsemblPlants" id="AT2G06166.1">
    <property type="protein sequence ID" value="AT2G06166.1"/>
    <property type="gene ID" value="AT2G06166"/>
</dbReference>
<dbReference type="GeneID" id="3767900"/>
<dbReference type="Gramene" id="AT2G06166.1">
    <property type="protein sequence ID" value="AT2G06166.1"/>
    <property type="gene ID" value="AT2G06166"/>
</dbReference>
<dbReference type="KEGG" id="ath:AT2G06166"/>
<dbReference type="Araport" id="AT2G06166"/>
<dbReference type="TAIR" id="AT2G06166"/>
<dbReference type="HOGENOM" id="CLU_184730_0_0_1"/>
<dbReference type="InParanoid" id="Q2V493"/>
<dbReference type="OMA" id="NCGVATC"/>
<dbReference type="PhylomeDB" id="Q2V493"/>
<dbReference type="PRO" id="PR:Q2V493"/>
<dbReference type="Proteomes" id="UP000006548">
    <property type="component" value="Chromosome 2"/>
</dbReference>
<dbReference type="GO" id="GO:0005576">
    <property type="term" value="C:extracellular region"/>
    <property type="evidence" value="ECO:0007669"/>
    <property type="project" value="UniProtKB-SubCell"/>
</dbReference>
<dbReference type="GO" id="GO:0050832">
    <property type="term" value="P:defense response to fungus"/>
    <property type="evidence" value="ECO:0007669"/>
    <property type="project" value="UniProtKB-KW"/>
</dbReference>
<dbReference type="GO" id="GO:0031640">
    <property type="term" value="P:killing of cells of another organism"/>
    <property type="evidence" value="ECO:0007669"/>
    <property type="project" value="UniProtKB-KW"/>
</dbReference>
<feature type="signal peptide" evidence="2">
    <location>
        <begin position="1"/>
        <end position="31"/>
    </location>
</feature>
<feature type="chain" id="PRO_0000379762" description="Putative defensin-like protein 305">
    <location>
        <begin position="32"/>
        <end position="103"/>
    </location>
</feature>
<feature type="disulfide bond" evidence="1">
    <location>
        <begin position="31"/>
        <end position="51"/>
    </location>
</feature>
<feature type="disulfide bond" evidence="1">
    <location>
        <begin position="37"/>
        <end position="56"/>
    </location>
</feature>
<feature type="disulfide bond" evidence="1">
    <location>
        <begin position="42"/>
        <end position="58"/>
    </location>
</feature>
<organism>
    <name type="scientific">Arabidopsis thaliana</name>
    <name type="common">Mouse-ear cress</name>
    <dbReference type="NCBI Taxonomy" id="3702"/>
    <lineage>
        <taxon>Eukaryota</taxon>
        <taxon>Viridiplantae</taxon>
        <taxon>Streptophyta</taxon>
        <taxon>Embryophyta</taxon>
        <taxon>Tracheophyta</taxon>
        <taxon>Spermatophyta</taxon>
        <taxon>Magnoliopsida</taxon>
        <taxon>eudicotyledons</taxon>
        <taxon>Gunneridae</taxon>
        <taxon>Pentapetalae</taxon>
        <taxon>rosids</taxon>
        <taxon>malvids</taxon>
        <taxon>Brassicales</taxon>
        <taxon>Brassicaceae</taxon>
        <taxon>Camelineae</taxon>
        <taxon>Arabidopsis</taxon>
    </lineage>
</organism>
<protein>
    <recommendedName>
        <fullName>Putative defensin-like protein 305</fullName>
    </recommendedName>
</protein>
<sequence>MREEILEIFLLVNFVFILCTSIMVRIRYVSCKTNFDCVNLKCPTPFVTPKCVSGGCECPLKELLTLLSDTNYGVAACIDYCKAKGENAYTCILNHCYCRKPSM</sequence>
<evidence type="ECO:0000250" key="1"/>
<evidence type="ECO:0000255" key="2"/>
<evidence type="ECO:0000305" key="3"/>
<keyword id="KW-0929">Antimicrobial</keyword>
<keyword id="KW-1015">Disulfide bond</keyword>
<keyword id="KW-0295">Fungicide</keyword>
<keyword id="KW-0611">Plant defense</keyword>
<keyword id="KW-1185">Reference proteome</keyword>
<keyword id="KW-0964">Secreted</keyword>
<keyword id="KW-0732">Signal</keyword>
<accession>Q2V493</accession>
<reference key="1">
    <citation type="journal article" date="1999" name="Nature">
        <title>Sequence and analysis of chromosome 2 of the plant Arabidopsis thaliana.</title>
        <authorList>
            <person name="Lin X."/>
            <person name="Kaul S."/>
            <person name="Rounsley S.D."/>
            <person name="Shea T.P."/>
            <person name="Benito M.-I."/>
            <person name="Town C.D."/>
            <person name="Fujii C.Y."/>
            <person name="Mason T.M."/>
            <person name="Bowman C.L."/>
            <person name="Barnstead M.E."/>
            <person name="Feldblyum T.V."/>
            <person name="Buell C.R."/>
            <person name="Ketchum K.A."/>
            <person name="Lee J.J."/>
            <person name="Ronning C.M."/>
            <person name="Koo H.L."/>
            <person name="Moffat K.S."/>
            <person name="Cronin L.A."/>
            <person name="Shen M."/>
            <person name="Pai G."/>
            <person name="Van Aken S."/>
            <person name="Umayam L."/>
            <person name="Tallon L.J."/>
            <person name="Gill J.E."/>
            <person name="Adams M.D."/>
            <person name="Carrera A.J."/>
            <person name="Creasy T.H."/>
            <person name="Goodman H.M."/>
            <person name="Somerville C.R."/>
            <person name="Copenhaver G.P."/>
            <person name="Preuss D."/>
            <person name="Nierman W.C."/>
            <person name="White O."/>
            <person name="Eisen J.A."/>
            <person name="Salzberg S.L."/>
            <person name="Fraser C.M."/>
            <person name="Venter J.C."/>
        </authorList>
    </citation>
    <scope>NUCLEOTIDE SEQUENCE [LARGE SCALE GENOMIC DNA]</scope>
    <source>
        <strain>cv. Columbia</strain>
    </source>
</reference>
<reference key="2">
    <citation type="journal article" date="2017" name="Plant J.">
        <title>Araport11: a complete reannotation of the Arabidopsis thaliana reference genome.</title>
        <authorList>
            <person name="Cheng C.Y."/>
            <person name="Krishnakumar V."/>
            <person name="Chan A.P."/>
            <person name="Thibaud-Nissen F."/>
            <person name="Schobel S."/>
            <person name="Town C.D."/>
        </authorList>
    </citation>
    <scope>GENOME REANNOTATION</scope>
    <source>
        <strain>cv. Columbia</strain>
    </source>
</reference>
<reference key="3">
    <citation type="journal article" date="2005" name="Plant Physiol.">
        <title>Genome organization of more than 300 defensin-like genes in Arabidopsis.</title>
        <authorList>
            <person name="Silverstein K.A.T."/>
            <person name="Graham M.A."/>
            <person name="Paape T.D."/>
            <person name="VandenBosch K.A."/>
        </authorList>
    </citation>
    <scope>GENE FAMILY</scope>
</reference>
<name>DF305_ARATH</name>
<comment type="subcellular location">
    <subcellularLocation>
        <location evidence="1">Secreted</location>
    </subcellularLocation>
</comment>
<comment type="similarity">
    <text evidence="3">Belongs to the DEFL family.</text>
</comment>
<comment type="caution">
    <text evidence="3">Lacks 1 of the 4 disulfide bonds, which are conserved features of the family.</text>
</comment>
<gene>
    <name type="ordered locus">At2g06166</name>
    <name type="ORF">F5K7</name>
</gene>
<proteinExistence type="inferred from homology"/>